<name>ADDB_PEDPA</name>
<dbReference type="EC" id="3.1.-.-" evidence="1"/>
<dbReference type="EMBL" id="CP000422">
    <property type="protein sequence ID" value="ABJ68852.1"/>
    <property type="molecule type" value="Genomic_DNA"/>
</dbReference>
<dbReference type="RefSeq" id="WP_011673919.1">
    <property type="nucleotide sequence ID" value="NC_008525.1"/>
</dbReference>
<dbReference type="SMR" id="Q03D70"/>
<dbReference type="STRING" id="278197.PEPE_1833"/>
<dbReference type="GeneID" id="33061292"/>
<dbReference type="KEGG" id="ppe:PEPE_1833"/>
<dbReference type="eggNOG" id="COG3857">
    <property type="taxonomic scope" value="Bacteria"/>
</dbReference>
<dbReference type="HOGENOM" id="CLU_007838_0_0_9"/>
<dbReference type="OrthoDB" id="9758506at2"/>
<dbReference type="Proteomes" id="UP000000773">
    <property type="component" value="Chromosome"/>
</dbReference>
<dbReference type="GO" id="GO:0008409">
    <property type="term" value="F:5'-3' exonuclease activity"/>
    <property type="evidence" value="ECO:0007669"/>
    <property type="project" value="UniProtKB-UniRule"/>
</dbReference>
<dbReference type="GO" id="GO:0005524">
    <property type="term" value="F:ATP binding"/>
    <property type="evidence" value="ECO:0007669"/>
    <property type="project" value="UniProtKB-UniRule"/>
</dbReference>
<dbReference type="GO" id="GO:0003690">
    <property type="term" value="F:double-stranded DNA binding"/>
    <property type="evidence" value="ECO:0007669"/>
    <property type="project" value="UniProtKB-UniRule"/>
</dbReference>
<dbReference type="GO" id="GO:0004386">
    <property type="term" value="F:helicase activity"/>
    <property type="evidence" value="ECO:0007669"/>
    <property type="project" value="UniProtKB-KW"/>
</dbReference>
<dbReference type="GO" id="GO:0016817">
    <property type="term" value="F:hydrolase activity, acting on acid anhydrides"/>
    <property type="evidence" value="ECO:0007669"/>
    <property type="project" value="InterPro"/>
</dbReference>
<dbReference type="GO" id="GO:0000724">
    <property type="term" value="P:double-strand break repair via homologous recombination"/>
    <property type="evidence" value="ECO:0007669"/>
    <property type="project" value="UniProtKB-UniRule"/>
</dbReference>
<dbReference type="Gene3D" id="3.90.320.10">
    <property type="match status" value="1"/>
</dbReference>
<dbReference type="Gene3D" id="3.40.50.300">
    <property type="entry name" value="P-loop containing nucleotide triphosphate hydrolases"/>
    <property type="match status" value="3"/>
</dbReference>
<dbReference type="HAMAP" id="MF_01453">
    <property type="entry name" value="AddB_type2"/>
    <property type="match status" value="1"/>
</dbReference>
<dbReference type="InterPro" id="IPR049035">
    <property type="entry name" value="ADDB_N"/>
</dbReference>
<dbReference type="InterPro" id="IPR014141">
    <property type="entry name" value="DNA_helicase_suRexB"/>
</dbReference>
<dbReference type="InterPro" id="IPR027417">
    <property type="entry name" value="P-loop_NTPase"/>
</dbReference>
<dbReference type="InterPro" id="IPR011604">
    <property type="entry name" value="PDDEXK-like_dom_sf"/>
</dbReference>
<dbReference type="InterPro" id="IPR038726">
    <property type="entry name" value="PDDEXK_AddAB-type"/>
</dbReference>
<dbReference type="PANTHER" id="PTHR30591">
    <property type="entry name" value="RECBCD ENZYME SUBUNIT RECC"/>
    <property type="match status" value="1"/>
</dbReference>
<dbReference type="PANTHER" id="PTHR30591:SF1">
    <property type="entry name" value="RECBCD ENZYME SUBUNIT RECC"/>
    <property type="match status" value="1"/>
</dbReference>
<dbReference type="Pfam" id="PF21445">
    <property type="entry name" value="ADDB_N"/>
    <property type="match status" value="1"/>
</dbReference>
<dbReference type="Pfam" id="PF12705">
    <property type="entry name" value="PDDEXK_1"/>
    <property type="match status" value="1"/>
</dbReference>
<dbReference type="SUPFAM" id="SSF52540">
    <property type="entry name" value="P-loop containing nucleoside triphosphate hydrolases"/>
    <property type="match status" value="1"/>
</dbReference>
<organism>
    <name type="scientific">Pediococcus pentosaceus (strain ATCC 25745 / CCUG 21536 / LMG 10740 / 183-1w)</name>
    <dbReference type="NCBI Taxonomy" id="278197"/>
    <lineage>
        <taxon>Bacteria</taxon>
        <taxon>Bacillati</taxon>
        <taxon>Bacillota</taxon>
        <taxon>Bacilli</taxon>
        <taxon>Lactobacillales</taxon>
        <taxon>Lactobacillaceae</taxon>
        <taxon>Pediococcus</taxon>
    </lineage>
</organism>
<sequence length="1192" mass="137874">MPLQFMYGPASIDHLEGIADRVIELQQQNVGQPVYYLVPNHIKFQSEIQLLQKLRQRRDVKSHIFAEKDVQILSISRLAWFFLRNSSIYQYPRVTSSSSNMLLYRVILEHQDELTLFHNIDAQLGLVQKIATQLAEFKQGNVGPDELGRVAENIAENSDAGMDIKAKLHDLGIIYSAYEEEIQSRFIDASDITHTLTDELSKMDLSGQSFIISGFSNFTAEEMSLIQALMKANGNVVIDLIMDKFPLYEKVSENSLFFENEKIIFKFNAWAHENKVKSLEPVRLHRVRVNSDLLKLEKYWIESSEGQVGGSKQENNACVTIFQANSRYAEVEHVATLIRQKMAKDPSLKFSDFSVLTRHLSDYSTIIKPIFDQMELPIFYDLQIAMKDHPLLELINALFDIRAHHFRYEDVMRLLKTGLLFPETEDDPHGMDFFKSVHITENYVLKQGIYGDRWLQKKDWKYSRFNDIDEEKQTDEEIEINQRINTVKNYVAETVVPFFNQLSTATTGVEAAKALYDFLIKNGIDQCLLAWRDQWIEEGRLAKAAEPEQTWETFIQMLDEFVDILGDQPFDPDNFMGLLNAGFEGATYSQIPSTLDQILVSESGMVQMVDRKIVFIIGATDRVMPEQIQDNDFLNQDGKNQIDPFLDDDQFLRISNDRQMRQEPYLNYLTFMIGSDELIFSYPKSGNDGVELKISPYVERIGKHFGIIAQSLPSRPTTEPVRLDPPFIELFIGSNRSTLSHLIQYARAMHEAKSEADPRWNLIYTILRQSTLGSLTDQLLSSLEYKNIPEKLKPEIVEGLYGDTIYASVSKLEEFYRNEYSYFLKYGLKLQERETSDLSPADTGQYFHAAMDKLIKMITTENLNFNEVNQEQIEQIAKRLVQQMEQDQQFDQFNGTYRMGFLRKQLDRTVQAMVEAIFKQLARTRMRPIASEQLFGQIGSQSGLPALNFKVGEGKEINVRGKIDRIDKIEIGDKDYLGIVDYKSSNRKFDFTDAYYGLAMQMLMYLDVVQRNKEKIDPATKAEISSALYMIFQYPLLKSKEWKGSDANQLNQSIFKKFSLNGFLLKDEELIKEIDKTIEDTRKSDVFPIAFTTKGTLTKVSENSILSEDELQNLIKHAELKVREAGEKIFKGELDMNPVQWPNRRTVMEYSPYKDVMQFDAMLPENNYRIIEKLDKDKVLEQIREEQEKNGR</sequence>
<accession>Q03D70</accession>
<keyword id="KW-0067">ATP-binding</keyword>
<keyword id="KW-0227">DNA damage</keyword>
<keyword id="KW-0234">DNA repair</keyword>
<keyword id="KW-0238">DNA-binding</keyword>
<keyword id="KW-0269">Exonuclease</keyword>
<keyword id="KW-0347">Helicase</keyword>
<keyword id="KW-0378">Hydrolase</keyword>
<keyword id="KW-0540">Nuclease</keyword>
<keyword id="KW-0547">Nucleotide-binding</keyword>
<feature type="chain" id="PRO_0000379386" description="ATP-dependent helicase/deoxyribonuclease subunit B">
    <location>
        <begin position="1"/>
        <end position="1192"/>
    </location>
</feature>
<proteinExistence type="inferred from homology"/>
<evidence type="ECO:0000255" key="1">
    <source>
        <dbReference type="HAMAP-Rule" id="MF_01453"/>
    </source>
</evidence>
<reference key="1">
    <citation type="journal article" date="2006" name="Proc. Natl. Acad. Sci. U.S.A.">
        <title>Comparative genomics of the lactic acid bacteria.</title>
        <authorList>
            <person name="Makarova K.S."/>
            <person name="Slesarev A."/>
            <person name="Wolf Y.I."/>
            <person name="Sorokin A."/>
            <person name="Mirkin B."/>
            <person name="Koonin E.V."/>
            <person name="Pavlov A."/>
            <person name="Pavlova N."/>
            <person name="Karamychev V."/>
            <person name="Polouchine N."/>
            <person name="Shakhova V."/>
            <person name="Grigoriev I."/>
            <person name="Lou Y."/>
            <person name="Rohksar D."/>
            <person name="Lucas S."/>
            <person name="Huang K."/>
            <person name="Goodstein D.M."/>
            <person name="Hawkins T."/>
            <person name="Plengvidhya V."/>
            <person name="Welker D."/>
            <person name="Hughes J."/>
            <person name="Goh Y."/>
            <person name="Benson A."/>
            <person name="Baldwin K."/>
            <person name="Lee J.-H."/>
            <person name="Diaz-Muniz I."/>
            <person name="Dosti B."/>
            <person name="Smeianov V."/>
            <person name="Wechter W."/>
            <person name="Barabote R."/>
            <person name="Lorca G."/>
            <person name="Altermann E."/>
            <person name="Barrangou R."/>
            <person name="Ganesan B."/>
            <person name="Xie Y."/>
            <person name="Rawsthorne H."/>
            <person name="Tamir D."/>
            <person name="Parker C."/>
            <person name="Breidt F."/>
            <person name="Broadbent J.R."/>
            <person name="Hutkins R."/>
            <person name="O'Sullivan D."/>
            <person name="Steele J."/>
            <person name="Unlu G."/>
            <person name="Saier M.H. Jr."/>
            <person name="Klaenhammer T."/>
            <person name="Richardson P."/>
            <person name="Kozyavkin S."/>
            <person name="Weimer B.C."/>
            <person name="Mills D.A."/>
        </authorList>
    </citation>
    <scope>NUCLEOTIDE SEQUENCE [LARGE SCALE GENOMIC DNA]</scope>
    <source>
        <strain>ATCC 25745 / CCUG 21536 / LMG 10740 / 183-1w</strain>
    </source>
</reference>
<protein>
    <recommendedName>
        <fullName evidence="1">ATP-dependent helicase/deoxyribonuclease subunit B</fullName>
        <ecNumber evidence="1">3.1.-.-</ecNumber>
    </recommendedName>
    <alternativeName>
        <fullName evidence="1">ATP-dependent helicase/nuclease subunit RexB</fullName>
    </alternativeName>
</protein>
<comment type="function">
    <text evidence="1">The heterodimer acts as both an ATP-dependent DNA helicase and an ATP-dependent, dual-direction single-stranded exonuclease. Recognizes the chi site generating a DNA molecule suitable for the initiation of homologous recombination. This subunit has 5' -&gt; 3' nuclease activity but not helicase activity.</text>
</comment>
<comment type="cofactor">
    <cofactor evidence="1">
        <name>Mg(2+)</name>
        <dbReference type="ChEBI" id="CHEBI:18420"/>
    </cofactor>
</comment>
<comment type="subunit">
    <text evidence="1">Heterodimer of AddA and RexB.</text>
</comment>
<comment type="miscellaneous">
    <text evidence="1">Despite having helicase-like domains, this subunit does not have helicase activity.</text>
</comment>
<comment type="similarity">
    <text evidence="1">Belongs to the helicase family. AddB/RexB type 2 subfamily.</text>
</comment>
<gene>
    <name evidence="1" type="primary">rexB</name>
    <name type="ordered locus">PEPE_1833</name>
</gene>